<accession>Q3KFC5</accession>
<dbReference type="EC" id="2.1.1.173" evidence="1"/>
<dbReference type="EC" id="2.1.1.264" evidence="1"/>
<dbReference type="EMBL" id="CP000094">
    <property type="protein sequence ID" value="ABA73531.1"/>
    <property type="molecule type" value="Genomic_DNA"/>
</dbReference>
<dbReference type="SMR" id="Q3KFC5"/>
<dbReference type="KEGG" id="pfo:Pfl01_1788"/>
<dbReference type="eggNOG" id="COG0116">
    <property type="taxonomic scope" value="Bacteria"/>
</dbReference>
<dbReference type="eggNOG" id="COG1092">
    <property type="taxonomic scope" value="Bacteria"/>
</dbReference>
<dbReference type="HOGENOM" id="CLU_014042_2_0_6"/>
<dbReference type="Proteomes" id="UP000002704">
    <property type="component" value="Chromosome"/>
</dbReference>
<dbReference type="GO" id="GO:0005737">
    <property type="term" value="C:cytoplasm"/>
    <property type="evidence" value="ECO:0007669"/>
    <property type="project" value="UniProtKB-SubCell"/>
</dbReference>
<dbReference type="GO" id="GO:0052915">
    <property type="term" value="F:23S rRNA (guanine(2445)-N(2))-methyltransferase activity"/>
    <property type="evidence" value="ECO:0007669"/>
    <property type="project" value="UniProtKB-UniRule"/>
</dbReference>
<dbReference type="GO" id="GO:0003723">
    <property type="term" value="F:RNA binding"/>
    <property type="evidence" value="ECO:0007669"/>
    <property type="project" value="UniProtKB-KW"/>
</dbReference>
<dbReference type="GO" id="GO:0070043">
    <property type="term" value="F:rRNA (guanine-N7-)-methyltransferase activity"/>
    <property type="evidence" value="ECO:0007669"/>
    <property type="project" value="UniProtKB-UniRule"/>
</dbReference>
<dbReference type="CDD" id="cd02440">
    <property type="entry name" value="AdoMet_MTases"/>
    <property type="match status" value="1"/>
</dbReference>
<dbReference type="CDD" id="cd11715">
    <property type="entry name" value="THUMP_AdoMetMT"/>
    <property type="match status" value="1"/>
</dbReference>
<dbReference type="Gene3D" id="3.30.2130.30">
    <property type="match status" value="1"/>
</dbReference>
<dbReference type="Gene3D" id="3.30.750.80">
    <property type="entry name" value="RNA methyltransferase domain (HRMD) like"/>
    <property type="match status" value="1"/>
</dbReference>
<dbReference type="Gene3D" id="3.40.50.150">
    <property type="entry name" value="Vaccinia Virus protein VP39"/>
    <property type="match status" value="2"/>
</dbReference>
<dbReference type="HAMAP" id="MF_01858">
    <property type="entry name" value="23SrRNA_methyltr_KL"/>
    <property type="match status" value="1"/>
</dbReference>
<dbReference type="InterPro" id="IPR017244">
    <property type="entry name" value="23SrRNA_methyltr_KL"/>
</dbReference>
<dbReference type="InterPro" id="IPR002052">
    <property type="entry name" value="DNA_methylase_N6_adenine_CS"/>
</dbReference>
<dbReference type="InterPro" id="IPR000241">
    <property type="entry name" value="RlmKL-like_Mtase"/>
</dbReference>
<dbReference type="InterPro" id="IPR054170">
    <property type="entry name" value="RlmL_1st"/>
</dbReference>
<dbReference type="InterPro" id="IPR019614">
    <property type="entry name" value="SAM-dep_methyl-trfase"/>
</dbReference>
<dbReference type="InterPro" id="IPR029063">
    <property type="entry name" value="SAM-dependent_MTases_sf"/>
</dbReference>
<dbReference type="InterPro" id="IPR004114">
    <property type="entry name" value="THUMP_dom"/>
</dbReference>
<dbReference type="NCBIfam" id="NF008748">
    <property type="entry name" value="PRK11783.1"/>
    <property type="match status" value="1"/>
</dbReference>
<dbReference type="PANTHER" id="PTHR47313">
    <property type="entry name" value="RIBOSOMAL RNA LARGE SUBUNIT METHYLTRANSFERASE K/L"/>
    <property type="match status" value="1"/>
</dbReference>
<dbReference type="PANTHER" id="PTHR47313:SF1">
    <property type="entry name" value="RIBOSOMAL RNA LARGE SUBUNIT METHYLTRANSFERASE K_L"/>
    <property type="match status" value="1"/>
</dbReference>
<dbReference type="Pfam" id="PF10672">
    <property type="entry name" value="Methyltrans_SAM"/>
    <property type="match status" value="1"/>
</dbReference>
<dbReference type="Pfam" id="PF22020">
    <property type="entry name" value="RlmL_1st"/>
    <property type="match status" value="1"/>
</dbReference>
<dbReference type="Pfam" id="PF02926">
    <property type="entry name" value="THUMP"/>
    <property type="match status" value="1"/>
</dbReference>
<dbReference type="Pfam" id="PF01170">
    <property type="entry name" value="UPF0020"/>
    <property type="match status" value="1"/>
</dbReference>
<dbReference type="PIRSF" id="PIRSF037618">
    <property type="entry name" value="RNA_Mtase_bacteria_prd"/>
    <property type="match status" value="1"/>
</dbReference>
<dbReference type="SMART" id="SM00981">
    <property type="entry name" value="THUMP"/>
    <property type="match status" value="1"/>
</dbReference>
<dbReference type="SUPFAM" id="SSF53335">
    <property type="entry name" value="S-adenosyl-L-methionine-dependent methyltransferases"/>
    <property type="match status" value="2"/>
</dbReference>
<dbReference type="PROSITE" id="PS51165">
    <property type="entry name" value="THUMP"/>
    <property type="match status" value="1"/>
</dbReference>
<keyword id="KW-0963">Cytoplasm</keyword>
<keyword id="KW-0489">Methyltransferase</keyword>
<keyword id="KW-0694">RNA-binding</keyword>
<keyword id="KW-0698">rRNA processing</keyword>
<keyword id="KW-0949">S-adenosyl-L-methionine</keyword>
<keyword id="KW-0808">Transferase</keyword>
<gene>
    <name evidence="1" type="primary">rlmL</name>
    <name type="ordered locus">Pfl01_1788</name>
</gene>
<comment type="function">
    <text evidence="1">Specifically methylates the guanine in position 2445 (m2G2445) and the guanine in position 2069 (m7G2069) of 23S rRNA.</text>
</comment>
<comment type="catalytic activity">
    <reaction evidence="1">
        <text>guanosine(2445) in 23S rRNA + S-adenosyl-L-methionine = N(2)-methylguanosine(2445) in 23S rRNA + S-adenosyl-L-homocysteine + H(+)</text>
        <dbReference type="Rhea" id="RHEA:42740"/>
        <dbReference type="Rhea" id="RHEA-COMP:10215"/>
        <dbReference type="Rhea" id="RHEA-COMP:10216"/>
        <dbReference type="ChEBI" id="CHEBI:15378"/>
        <dbReference type="ChEBI" id="CHEBI:57856"/>
        <dbReference type="ChEBI" id="CHEBI:59789"/>
        <dbReference type="ChEBI" id="CHEBI:74269"/>
        <dbReference type="ChEBI" id="CHEBI:74481"/>
        <dbReference type="EC" id="2.1.1.173"/>
    </reaction>
</comment>
<comment type="catalytic activity">
    <reaction evidence="1">
        <text>guanosine(2069) in 23S rRNA + S-adenosyl-L-methionine = N(2)-methylguanosine(2069) in 23S rRNA + S-adenosyl-L-homocysteine + H(+)</text>
        <dbReference type="Rhea" id="RHEA:43772"/>
        <dbReference type="Rhea" id="RHEA-COMP:10688"/>
        <dbReference type="Rhea" id="RHEA-COMP:10689"/>
        <dbReference type="ChEBI" id="CHEBI:15378"/>
        <dbReference type="ChEBI" id="CHEBI:57856"/>
        <dbReference type="ChEBI" id="CHEBI:59789"/>
        <dbReference type="ChEBI" id="CHEBI:74269"/>
        <dbReference type="ChEBI" id="CHEBI:74481"/>
        <dbReference type="EC" id="2.1.1.264"/>
    </reaction>
</comment>
<comment type="subcellular location">
    <subcellularLocation>
        <location evidence="1">Cytoplasm</location>
    </subcellularLocation>
</comment>
<comment type="similarity">
    <text evidence="1">Belongs to the methyltransferase superfamily. RlmKL family.</text>
</comment>
<reference key="1">
    <citation type="journal article" date="2009" name="Genome Biol.">
        <title>Genomic and genetic analyses of diversity and plant interactions of Pseudomonas fluorescens.</title>
        <authorList>
            <person name="Silby M.W."/>
            <person name="Cerdeno-Tarraga A.M."/>
            <person name="Vernikos G.S."/>
            <person name="Giddens S.R."/>
            <person name="Jackson R.W."/>
            <person name="Preston G.M."/>
            <person name="Zhang X.-X."/>
            <person name="Moon C.D."/>
            <person name="Gehrig S.M."/>
            <person name="Godfrey S.A.C."/>
            <person name="Knight C.G."/>
            <person name="Malone J.G."/>
            <person name="Robinson Z."/>
            <person name="Spiers A.J."/>
            <person name="Harris S."/>
            <person name="Challis G.L."/>
            <person name="Yaxley A.M."/>
            <person name="Harris D."/>
            <person name="Seeger K."/>
            <person name="Murphy L."/>
            <person name="Rutter S."/>
            <person name="Squares R."/>
            <person name="Quail M.A."/>
            <person name="Saunders E."/>
            <person name="Mavromatis K."/>
            <person name="Brettin T.S."/>
            <person name="Bentley S.D."/>
            <person name="Hothersall J."/>
            <person name="Stephens E."/>
            <person name="Thomas C.M."/>
            <person name="Parkhill J."/>
            <person name="Levy S.B."/>
            <person name="Rainey P.B."/>
            <person name="Thomson N.R."/>
        </authorList>
    </citation>
    <scope>NUCLEOTIDE SEQUENCE [LARGE SCALE GENOMIC DNA]</scope>
    <source>
        <strain>Pf0-1</strain>
    </source>
</reference>
<protein>
    <recommendedName>
        <fullName evidence="1">Ribosomal RNA large subunit methyltransferase K/L</fullName>
    </recommendedName>
    <domain>
        <recommendedName>
            <fullName evidence="1">23S rRNA m2G2445 methyltransferase</fullName>
            <ecNumber evidence="1">2.1.1.173</ecNumber>
        </recommendedName>
        <alternativeName>
            <fullName evidence="1">rRNA (guanine-N(2)-)-methyltransferase RlmL</fullName>
        </alternativeName>
    </domain>
    <domain>
        <recommendedName>
            <fullName evidence="1">23S rRNA m7G2069 methyltransferase</fullName>
            <ecNumber evidence="1">2.1.1.264</ecNumber>
        </recommendedName>
        <alternativeName>
            <fullName evidence="1">rRNA (guanine-N(7)-)-methyltransferase RlmK</fullName>
        </alternativeName>
    </domain>
</protein>
<name>RLMKL_PSEPF</name>
<proteinExistence type="inferred from homology"/>
<organism>
    <name type="scientific">Pseudomonas fluorescens (strain Pf0-1)</name>
    <dbReference type="NCBI Taxonomy" id="205922"/>
    <lineage>
        <taxon>Bacteria</taxon>
        <taxon>Pseudomonadati</taxon>
        <taxon>Pseudomonadota</taxon>
        <taxon>Gammaproteobacteria</taxon>
        <taxon>Pseudomonadales</taxon>
        <taxon>Pseudomonadaceae</taxon>
        <taxon>Pseudomonas</taxon>
    </lineage>
</organism>
<sequence length="756" mass="85281">MSDRFELFLTCPKGLEGLLIEEAVGLGLEEAREHTSAVRGMATMETAYRLCLWSRLANRVLLVLKRFPMKNAEDLYHGVLDVDWQDHMLADGTLAVEFSGHGSGIDNTHFGALKVKDAIVDKLRTPQGDRPSIDKLNPDLRIHLRLDRGEAILSLDLSGHSLHQRGYRLQQGAAPLKENLAAAILIRSGWPRIAAEGGALADPMCGVGTFLVEAGMIAADMAPNLRREQWGFTAWLGHVPALWKKLHEEAVERAAAGLAKPPLWIRGYEADPRLIQPGRNNVERAGLSEWIKIYQGEVATFEPRPDQNQKGLVICNPPYGERLGDEASLLYLYQNLGERLRQACLNWEAAVFTGAPDLGKRMGIRSHKQYSFWNGALPCKLLLIKVLPDQFVTGERRTPEQRQAEREQAAYDQTPNEPQERKFNKNGNPIKPTPAPAPVIEQPRLSEGGQMFANRLQKNLKAMSKWVKREGIDCYRVYDADMPEYAMAIDLYHDWVHVQEYAAPKSIDPEKASIRMFDALAAIPQALNIDKSRVVVKRRERQSGTKQYERQAAQGKFNEVTEGGVKLLVNLTDYLDTGLFLDHRPMRMRIQKEAAGKRFLNLFCYTATASVHAAKGGARSTTSVDLSKTYLDWARRNLSLNGFSDKNRLEQGDVMAWLENCREEYDLIFIDPPTFSNSKRMEGIFDVQRDQVQLIDLAMARLASGGVLYFSNNFRKFQLEDNLAERYAVEEITASTIDPDFARNGKIHRAWKITAR</sequence>
<feature type="chain" id="PRO_0000366789" description="Ribosomal RNA large subunit methyltransferase K/L">
    <location>
        <begin position="1"/>
        <end position="756"/>
    </location>
</feature>
<feature type="domain" description="THUMP" evidence="1">
    <location>
        <begin position="46"/>
        <end position="157"/>
    </location>
</feature>
<feature type="region of interest" description="Disordered" evidence="2">
    <location>
        <begin position="395"/>
        <end position="441"/>
    </location>
</feature>
<feature type="compositionally biased region" description="Basic and acidic residues" evidence="2">
    <location>
        <begin position="395"/>
        <end position="409"/>
    </location>
</feature>
<evidence type="ECO:0000255" key="1">
    <source>
        <dbReference type="HAMAP-Rule" id="MF_01858"/>
    </source>
</evidence>
<evidence type="ECO:0000256" key="2">
    <source>
        <dbReference type="SAM" id="MobiDB-lite"/>
    </source>
</evidence>